<evidence type="ECO:0000250" key="1"/>
<evidence type="ECO:0000250" key="2">
    <source>
        <dbReference type="UniProtKB" id="P00157"/>
    </source>
</evidence>
<evidence type="ECO:0000255" key="3">
    <source>
        <dbReference type="PROSITE-ProRule" id="PRU00967"/>
    </source>
</evidence>
<evidence type="ECO:0000255" key="4">
    <source>
        <dbReference type="PROSITE-ProRule" id="PRU00968"/>
    </source>
</evidence>
<proteinExistence type="inferred from homology"/>
<sequence>MTNIRKTHPLLKIINSSFVDLPAPSSLSSWWNFGSLLGVCLAVQILTGLFLAMHYTSDTATAFNSVTHICRDVNYGWLLRYLHANGASMFFICLYLHVGRGLYYGSYTYSETWNVGILLLFAVMATAFMGYVLPWGQMSFWGATVITNLLSAIPYIGTDLVQWIWGGFSVDKATLTRFFAFHFLLPFIVAALVMVHLLFLHETGSNNPTGIPSDPDMIPFHPYYTIKDILGFLIMLTALSALVLFSPDLLGDPDNYIPANPLNTPPHIKPEWYFLFAYAILRSIPNKLGGVLALVMSILILALAPILHMSKQRSMMFRPLSQCLFWLLVAVLFTLTWIGGQPVEHPYIIIGQTASVLYFLIILVLMPATSIMENYLLKW</sequence>
<geneLocation type="mitochondrion"/>
<dbReference type="EMBL" id="AY169958">
    <property type="protein sequence ID" value="AAO41834.1"/>
    <property type="molecule type" value="Genomic_DNA"/>
</dbReference>
<dbReference type="SMR" id="Q6Y8J6"/>
<dbReference type="GO" id="GO:0005743">
    <property type="term" value="C:mitochondrial inner membrane"/>
    <property type="evidence" value="ECO:0007669"/>
    <property type="project" value="UniProtKB-SubCell"/>
</dbReference>
<dbReference type="GO" id="GO:0045275">
    <property type="term" value="C:respiratory chain complex III"/>
    <property type="evidence" value="ECO:0007669"/>
    <property type="project" value="InterPro"/>
</dbReference>
<dbReference type="GO" id="GO:0046872">
    <property type="term" value="F:metal ion binding"/>
    <property type="evidence" value="ECO:0007669"/>
    <property type="project" value="UniProtKB-KW"/>
</dbReference>
<dbReference type="GO" id="GO:0008121">
    <property type="term" value="F:ubiquinol-cytochrome-c reductase activity"/>
    <property type="evidence" value="ECO:0007669"/>
    <property type="project" value="InterPro"/>
</dbReference>
<dbReference type="GO" id="GO:0006122">
    <property type="term" value="P:mitochondrial electron transport, ubiquinol to cytochrome c"/>
    <property type="evidence" value="ECO:0007669"/>
    <property type="project" value="TreeGrafter"/>
</dbReference>
<dbReference type="CDD" id="cd00290">
    <property type="entry name" value="cytochrome_b_C"/>
    <property type="match status" value="1"/>
</dbReference>
<dbReference type="CDD" id="cd00284">
    <property type="entry name" value="Cytochrome_b_N"/>
    <property type="match status" value="1"/>
</dbReference>
<dbReference type="FunFam" id="1.20.810.10:FF:000002">
    <property type="entry name" value="Cytochrome b"/>
    <property type="match status" value="1"/>
</dbReference>
<dbReference type="Gene3D" id="1.20.810.10">
    <property type="entry name" value="Cytochrome Bc1 Complex, Chain C"/>
    <property type="match status" value="1"/>
</dbReference>
<dbReference type="InterPro" id="IPR005798">
    <property type="entry name" value="Cyt_b/b6_C"/>
</dbReference>
<dbReference type="InterPro" id="IPR036150">
    <property type="entry name" value="Cyt_b/b6_C_sf"/>
</dbReference>
<dbReference type="InterPro" id="IPR005797">
    <property type="entry name" value="Cyt_b/b6_N"/>
</dbReference>
<dbReference type="InterPro" id="IPR027387">
    <property type="entry name" value="Cytb/b6-like_sf"/>
</dbReference>
<dbReference type="InterPro" id="IPR030689">
    <property type="entry name" value="Cytochrome_b"/>
</dbReference>
<dbReference type="InterPro" id="IPR048260">
    <property type="entry name" value="Cytochrome_b_C_euk/bac"/>
</dbReference>
<dbReference type="InterPro" id="IPR048259">
    <property type="entry name" value="Cytochrome_b_N_euk/bac"/>
</dbReference>
<dbReference type="InterPro" id="IPR016174">
    <property type="entry name" value="Di-haem_cyt_TM"/>
</dbReference>
<dbReference type="PANTHER" id="PTHR19271">
    <property type="entry name" value="CYTOCHROME B"/>
    <property type="match status" value="1"/>
</dbReference>
<dbReference type="PANTHER" id="PTHR19271:SF16">
    <property type="entry name" value="CYTOCHROME B"/>
    <property type="match status" value="1"/>
</dbReference>
<dbReference type="Pfam" id="PF00032">
    <property type="entry name" value="Cytochrom_B_C"/>
    <property type="match status" value="1"/>
</dbReference>
<dbReference type="Pfam" id="PF00033">
    <property type="entry name" value="Cytochrome_B"/>
    <property type="match status" value="1"/>
</dbReference>
<dbReference type="PIRSF" id="PIRSF038885">
    <property type="entry name" value="COB"/>
    <property type="match status" value="1"/>
</dbReference>
<dbReference type="SUPFAM" id="SSF81648">
    <property type="entry name" value="a domain/subunit of cytochrome bc1 complex (Ubiquinol-cytochrome c reductase)"/>
    <property type="match status" value="1"/>
</dbReference>
<dbReference type="SUPFAM" id="SSF81342">
    <property type="entry name" value="Transmembrane di-heme cytochromes"/>
    <property type="match status" value="1"/>
</dbReference>
<dbReference type="PROSITE" id="PS51003">
    <property type="entry name" value="CYTB_CTER"/>
    <property type="match status" value="1"/>
</dbReference>
<dbReference type="PROSITE" id="PS51002">
    <property type="entry name" value="CYTB_NTER"/>
    <property type="match status" value="1"/>
</dbReference>
<organism>
    <name type="scientific">Chiroderma doriae</name>
    <name type="common">Brazilian big-eyed bat</name>
    <dbReference type="NCBI Taxonomy" id="33544"/>
    <lineage>
        <taxon>Eukaryota</taxon>
        <taxon>Metazoa</taxon>
        <taxon>Chordata</taxon>
        <taxon>Craniata</taxon>
        <taxon>Vertebrata</taxon>
        <taxon>Euteleostomi</taxon>
        <taxon>Mammalia</taxon>
        <taxon>Eutheria</taxon>
        <taxon>Laurasiatheria</taxon>
        <taxon>Chiroptera</taxon>
        <taxon>Yangochiroptera</taxon>
        <taxon>Phyllostomidae</taxon>
        <taxon>Stenodermatinae</taxon>
        <taxon>Chiroderma</taxon>
    </lineage>
</organism>
<reference key="1">
    <citation type="journal article" date="2003" name="Mol. Ecol.">
        <title>mtDNA perspective of chromosomal diversification and hybridization in Peters' tent-making bat (Uroderma bilobatum: Phyllostomidae).</title>
        <authorList>
            <person name="Hoffmann F.G."/>
            <person name="Owen J.G."/>
            <person name="Baker R.J."/>
        </authorList>
    </citation>
    <scope>NUCLEOTIDE SEQUENCE [GENOMIC DNA]</scope>
    <source>
        <strain>Isolate TK 16379</strain>
    </source>
</reference>
<protein>
    <recommendedName>
        <fullName>Cytochrome b</fullName>
    </recommendedName>
    <alternativeName>
        <fullName>Complex III subunit 3</fullName>
    </alternativeName>
    <alternativeName>
        <fullName>Complex III subunit III</fullName>
    </alternativeName>
    <alternativeName>
        <fullName>Cytochrome b-c1 complex subunit 3</fullName>
    </alternativeName>
    <alternativeName>
        <fullName>Ubiquinol-cytochrome-c reductase complex cytochrome b subunit</fullName>
    </alternativeName>
</protein>
<name>CYB_CHIDO</name>
<keyword id="KW-0249">Electron transport</keyword>
<keyword id="KW-0349">Heme</keyword>
<keyword id="KW-0408">Iron</keyword>
<keyword id="KW-0472">Membrane</keyword>
<keyword id="KW-0479">Metal-binding</keyword>
<keyword id="KW-0496">Mitochondrion</keyword>
<keyword id="KW-0999">Mitochondrion inner membrane</keyword>
<keyword id="KW-0679">Respiratory chain</keyword>
<keyword id="KW-0812">Transmembrane</keyword>
<keyword id="KW-1133">Transmembrane helix</keyword>
<keyword id="KW-0813">Transport</keyword>
<keyword id="KW-0830">Ubiquinone</keyword>
<accession>Q6Y8J6</accession>
<gene>
    <name type="primary">MT-CYB</name>
    <name type="synonym">COB</name>
    <name type="synonym">CYTB</name>
    <name type="synonym">MTCYB</name>
</gene>
<comment type="function">
    <text evidence="2">Component of the ubiquinol-cytochrome c reductase complex (complex III or cytochrome b-c1 complex) that is part of the mitochondrial respiratory chain. The b-c1 complex mediates electron transfer from ubiquinol to cytochrome c. Contributes to the generation of a proton gradient across the mitochondrial membrane that is then used for ATP synthesis.</text>
</comment>
<comment type="cofactor">
    <cofactor evidence="2">
        <name>heme b</name>
        <dbReference type="ChEBI" id="CHEBI:60344"/>
    </cofactor>
    <text evidence="2">Binds 2 heme b groups non-covalently.</text>
</comment>
<comment type="subunit">
    <text evidence="2">The cytochrome bc1 complex contains 11 subunits: 3 respiratory subunits (MT-CYB, CYC1 and UQCRFS1), 2 core proteins (UQCRC1 and UQCRC2) and 6 low-molecular weight proteins (UQCRH/QCR6, UQCRB/QCR7, UQCRQ/QCR8, UQCR10/QCR9, UQCR11/QCR10 and a cleavage product of UQCRFS1). This cytochrome bc1 complex then forms a dimer.</text>
</comment>
<comment type="subcellular location">
    <subcellularLocation>
        <location evidence="2">Mitochondrion inner membrane</location>
        <topology evidence="2">Multi-pass membrane protein</topology>
    </subcellularLocation>
</comment>
<comment type="miscellaneous">
    <text evidence="1">Heme 1 (or BL or b562) is low-potential and absorbs at about 562 nm, and heme 2 (or BH or b566) is high-potential and absorbs at about 566 nm.</text>
</comment>
<comment type="similarity">
    <text evidence="3 4">Belongs to the cytochrome b family.</text>
</comment>
<comment type="caution">
    <text evidence="2">The full-length protein contains only eight transmembrane helices, not nine as predicted by bioinformatics tools.</text>
</comment>
<feature type="chain" id="PRO_0000060777" description="Cytochrome b">
    <location>
        <begin position="1"/>
        <end position="379"/>
    </location>
</feature>
<feature type="transmembrane region" description="Helical" evidence="2">
    <location>
        <begin position="33"/>
        <end position="53"/>
    </location>
</feature>
<feature type="transmembrane region" description="Helical" evidence="2">
    <location>
        <begin position="77"/>
        <end position="98"/>
    </location>
</feature>
<feature type="transmembrane region" description="Helical" evidence="2">
    <location>
        <begin position="113"/>
        <end position="133"/>
    </location>
</feature>
<feature type="transmembrane region" description="Helical" evidence="2">
    <location>
        <begin position="178"/>
        <end position="198"/>
    </location>
</feature>
<feature type="transmembrane region" description="Helical" evidence="2">
    <location>
        <begin position="226"/>
        <end position="246"/>
    </location>
</feature>
<feature type="transmembrane region" description="Helical" evidence="2">
    <location>
        <begin position="288"/>
        <end position="308"/>
    </location>
</feature>
<feature type="transmembrane region" description="Helical" evidence="2">
    <location>
        <begin position="320"/>
        <end position="340"/>
    </location>
</feature>
<feature type="transmembrane region" description="Helical" evidence="2">
    <location>
        <begin position="347"/>
        <end position="367"/>
    </location>
</feature>
<feature type="binding site" description="axial binding residue" evidence="2">
    <location>
        <position position="83"/>
    </location>
    <ligand>
        <name>heme b</name>
        <dbReference type="ChEBI" id="CHEBI:60344"/>
        <label>b562</label>
    </ligand>
    <ligandPart>
        <name>Fe</name>
        <dbReference type="ChEBI" id="CHEBI:18248"/>
    </ligandPart>
</feature>
<feature type="binding site" description="axial binding residue" evidence="2">
    <location>
        <position position="97"/>
    </location>
    <ligand>
        <name>heme b</name>
        <dbReference type="ChEBI" id="CHEBI:60344"/>
        <label>b566</label>
    </ligand>
    <ligandPart>
        <name>Fe</name>
        <dbReference type="ChEBI" id="CHEBI:18248"/>
    </ligandPart>
</feature>
<feature type="binding site" description="axial binding residue" evidence="2">
    <location>
        <position position="182"/>
    </location>
    <ligand>
        <name>heme b</name>
        <dbReference type="ChEBI" id="CHEBI:60344"/>
        <label>b562</label>
    </ligand>
    <ligandPart>
        <name>Fe</name>
        <dbReference type="ChEBI" id="CHEBI:18248"/>
    </ligandPart>
</feature>
<feature type="binding site" description="axial binding residue" evidence="2">
    <location>
        <position position="196"/>
    </location>
    <ligand>
        <name>heme b</name>
        <dbReference type="ChEBI" id="CHEBI:60344"/>
        <label>b566</label>
    </ligand>
    <ligandPart>
        <name>Fe</name>
        <dbReference type="ChEBI" id="CHEBI:18248"/>
    </ligandPart>
</feature>
<feature type="binding site" evidence="2">
    <location>
        <position position="201"/>
    </location>
    <ligand>
        <name>a ubiquinone</name>
        <dbReference type="ChEBI" id="CHEBI:16389"/>
    </ligand>
</feature>